<keyword id="KW-0238">DNA-binding</keyword>
<keyword id="KW-0371">Homeobox</keyword>
<keyword id="KW-0539">Nucleus</keyword>
<keyword id="KW-1185">Reference proteome</keyword>
<keyword id="KW-0678">Repressor</keyword>
<keyword id="KW-0804">Transcription</keyword>
<keyword id="KW-0805">Transcription regulation</keyword>
<dbReference type="EMBL" id="AF167162">
    <property type="protein sequence ID" value="AAD51404.1"/>
    <property type="molecule type" value="Genomic_DNA"/>
</dbReference>
<dbReference type="EMBL" id="CP017627">
    <property type="protein sequence ID" value="AOW29605.1"/>
    <property type="molecule type" value="Genomic_DNA"/>
</dbReference>
<dbReference type="RefSeq" id="XP_019330959.1">
    <property type="nucleotide sequence ID" value="XM_019475414.1"/>
</dbReference>
<dbReference type="SMR" id="Q9UW23"/>
<dbReference type="FunCoup" id="Q9UW23">
    <property type="interactions" value="161"/>
</dbReference>
<dbReference type="STRING" id="237561.Q9UW23"/>
<dbReference type="EnsemblFungi" id="C5_01740C_A-T">
    <property type="protein sequence ID" value="C5_01740C_A-T-p1"/>
    <property type="gene ID" value="C5_01740C_A"/>
</dbReference>
<dbReference type="GeneID" id="3643729"/>
<dbReference type="KEGG" id="cal:CAALFM_C501740CA"/>
<dbReference type="CGD" id="CAL0000200104">
    <property type="gene designation" value="MTLA1"/>
</dbReference>
<dbReference type="VEuPathDB" id="FungiDB:C5_01740C_A"/>
<dbReference type="HOGENOM" id="CLU_1669146_0_0_1"/>
<dbReference type="InParanoid" id="Q9UW23"/>
<dbReference type="OMA" id="QIRVWFT"/>
<dbReference type="OrthoDB" id="4026277at2759"/>
<dbReference type="Proteomes" id="UP000000559">
    <property type="component" value="Chromosome 5"/>
</dbReference>
<dbReference type="GO" id="GO:0005634">
    <property type="term" value="C:nucleus"/>
    <property type="evidence" value="ECO:0007669"/>
    <property type="project" value="UniProtKB-SubCell"/>
</dbReference>
<dbReference type="GO" id="GO:0003677">
    <property type="term" value="F:DNA binding"/>
    <property type="evidence" value="ECO:0000314"/>
    <property type="project" value="CGD"/>
</dbReference>
<dbReference type="GO" id="GO:0003700">
    <property type="term" value="F:DNA-binding transcription factor activity"/>
    <property type="evidence" value="ECO:0000315"/>
    <property type="project" value="CGD"/>
</dbReference>
<dbReference type="GO" id="GO:0031138">
    <property type="term" value="P:negative regulation of conjugation with cellular fusion"/>
    <property type="evidence" value="ECO:0000315"/>
    <property type="project" value="CGD"/>
</dbReference>
<dbReference type="GO" id="GO:0000122">
    <property type="term" value="P:negative regulation of transcription by RNA polymerase II"/>
    <property type="evidence" value="ECO:0000315"/>
    <property type="project" value="CGD"/>
</dbReference>
<dbReference type="GO" id="GO:0036166">
    <property type="term" value="P:phenotypic switching"/>
    <property type="evidence" value="ECO:0000315"/>
    <property type="project" value="CGD"/>
</dbReference>
<dbReference type="GO" id="GO:1900239">
    <property type="term" value="P:regulation of phenotypic switching"/>
    <property type="evidence" value="ECO:0000315"/>
    <property type="project" value="CGD"/>
</dbReference>
<dbReference type="CDD" id="cd00086">
    <property type="entry name" value="homeodomain"/>
    <property type="match status" value="1"/>
</dbReference>
<dbReference type="Gene3D" id="1.10.10.60">
    <property type="entry name" value="Homeodomain-like"/>
    <property type="match status" value="1"/>
</dbReference>
<dbReference type="InterPro" id="IPR001356">
    <property type="entry name" value="HD"/>
</dbReference>
<dbReference type="InterPro" id="IPR009057">
    <property type="entry name" value="Homeodomain-like_sf"/>
</dbReference>
<dbReference type="Pfam" id="PF00046">
    <property type="entry name" value="Homeodomain"/>
    <property type="match status" value="1"/>
</dbReference>
<dbReference type="SMART" id="SM00389">
    <property type="entry name" value="HOX"/>
    <property type="match status" value="1"/>
</dbReference>
<dbReference type="SUPFAM" id="SSF46689">
    <property type="entry name" value="Homeodomain-like"/>
    <property type="match status" value="1"/>
</dbReference>
<dbReference type="PROSITE" id="PS50071">
    <property type="entry name" value="HOMEOBOX_2"/>
    <property type="match status" value="1"/>
</dbReference>
<evidence type="ECO:0000250" key="1"/>
<evidence type="ECO:0000255" key="2">
    <source>
        <dbReference type="PROSITE-ProRule" id="PRU00108"/>
    </source>
</evidence>
<evidence type="ECO:0000269" key="3">
    <source>
    </source>
</evidence>
<evidence type="ECO:0000269" key="4">
    <source>
    </source>
</evidence>
<evidence type="ECO:0000269" key="5">
    <source>
    </source>
</evidence>
<evidence type="ECO:0000269" key="6">
    <source>
    </source>
</evidence>
<evidence type="ECO:0000305" key="7"/>
<sequence length="210" mass="24712">MNSEIESSLTLLKSVEKLVQATSVYKNEDNEEIFLQLKRERQENSNSHEETETLFHESLDRLMKLSSIAGSKVQYELSLNNLYNLLLRTRKQEEEEAFIFPTVSTEEFALEQITFEVSDQMDDDKDSEDDILIKGEEIKKSKKKRQRLDNSTKEFLEKVFEKNKQPNRRERELIAEKHGVSLSQIRVWFTNKRMRKKEPKSKAKSSSNST</sequence>
<name>MATA1_CANAL</name>
<feature type="chain" id="PRO_0000049172" description="Mating-type-like protein A1">
    <location>
        <begin position="1"/>
        <end position="210"/>
    </location>
</feature>
<feature type="DNA-binding region" description="Homeobox" evidence="2">
    <location>
        <begin position="141"/>
        <end position="200"/>
    </location>
</feature>
<feature type="sequence conflict" description="In Ref. 1; AAD51404." evidence="7" ref="1">
    <original>L</original>
    <variation>F</variation>
    <location>
        <position position="54"/>
    </location>
</feature>
<accession>Q9UW23</accession>
<accession>A0A1D8PN95</accession>
<accession>Q59YH9</accession>
<organism>
    <name type="scientific">Candida albicans (strain SC5314 / ATCC MYA-2876)</name>
    <name type="common">Yeast</name>
    <dbReference type="NCBI Taxonomy" id="237561"/>
    <lineage>
        <taxon>Eukaryota</taxon>
        <taxon>Fungi</taxon>
        <taxon>Dikarya</taxon>
        <taxon>Ascomycota</taxon>
        <taxon>Saccharomycotina</taxon>
        <taxon>Pichiomycetes</taxon>
        <taxon>Debaryomycetaceae</taxon>
        <taxon>Candida/Lodderomyces clade</taxon>
        <taxon>Candida</taxon>
    </lineage>
</organism>
<reference key="1">
    <citation type="journal article" date="1999" name="Science">
        <title>Identification of a mating type-like locus in the asexual pathogenic yeast Candida albicans.</title>
        <authorList>
            <person name="Hull C.M."/>
            <person name="Johnson A.D."/>
        </authorList>
    </citation>
    <scope>NUCLEOTIDE SEQUENCE [GENOMIC DNA]</scope>
    <scope>FUNCTION IN TRANSCRIPTIONAL REPRESSION</scope>
    <source>
        <strain>SC5314 / ATCC MYA-2876</strain>
    </source>
</reference>
<reference key="2">
    <citation type="journal article" date="2004" name="Proc. Natl. Acad. Sci. U.S.A.">
        <title>The diploid genome sequence of Candida albicans.</title>
        <authorList>
            <person name="Jones T."/>
            <person name="Federspiel N.A."/>
            <person name="Chibana H."/>
            <person name="Dungan J."/>
            <person name="Kalman S."/>
            <person name="Magee B.B."/>
            <person name="Newport G."/>
            <person name="Thorstenson Y.R."/>
            <person name="Agabian N."/>
            <person name="Magee P.T."/>
            <person name="Davis R.W."/>
            <person name="Scherer S."/>
        </authorList>
    </citation>
    <scope>NUCLEOTIDE SEQUENCE [LARGE SCALE GENOMIC DNA]</scope>
    <source>
        <strain>SC5314 / ATCC MYA-2876</strain>
    </source>
</reference>
<reference key="3">
    <citation type="journal article" date="2007" name="Genome Biol.">
        <title>Assembly of the Candida albicans genome into sixteen supercontigs aligned on the eight chromosomes.</title>
        <authorList>
            <person name="van het Hoog M."/>
            <person name="Rast T.J."/>
            <person name="Martchenko M."/>
            <person name="Grindle S."/>
            <person name="Dignard D."/>
            <person name="Hogues H."/>
            <person name="Cuomo C."/>
            <person name="Berriman M."/>
            <person name="Scherer S."/>
            <person name="Magee B.B."/>
            <person name="Whiteway M."/>
            <person name="Chibana H."/>
            <person name="Nantel A."/>
            <person name="Magee P.T."/>
        </authorList>
    </citation>
    <scope>GENOME REANNOTATION</scope>
    <source>
        <strain>SC5314 / ATCC MYA-2876</strain>
    </source>
</reference>
<reference key="4">
    <citation type="journal article" date="2013" name="Genome Biol.">
        <title>Assembly of a phased diploid Candida albicans genome facilitates allele-specific measurements and provides a simple model for repeat and indel structure.</title>
        <authorList>
            <person name="Muzzey D."/>
            <person name="Schwartz K."/>
            <person name="Weissman J.S."/>
            <person name="Sherlock G."/>
        </authorList>
    </citation>
    <scope>NUCLEOTIDE SEQUENCE [LARGE SCALE GENOMIC DNA]</scope>
    <scope>GENOME REANNOTATION</scope>
    <source>
        <strain>SC5314 / ATCC MYA-2876</strain>
    </source>
</reference>
<reference key="5">
    <citation type="journal article" date="2003" name="Cell">
        <title>Evolution of a combinatorial transcriptional circuit: a case study in yeasts.</title>
        <authorList>
            <person name="Tsong A.E."/>
            <person name="Miller M.G."/>
            <person name="Raisner R.M."/>
            <person name="Johnson A.D."/>
        </authorList>
    </citation>
    <scope>FUNCTION</scope>
    <source>
        <strain>SC5314 / ATCC MYA-2876</strain>
    </source>
</reference>
<reference key="6">
    <citation type="journal article" date="2002" name="Cell">
        <title>White-opaque switching in Candida albicans is controlled by mating-type locus homeodomain proteins and allows efficient mating.</title>
        <authorList>
            <person name="Miller M.G."/>
            <person name="Johnson A.D."/>
        </authorList>
    </citation>
    <scope>FUNCTION</scope>
</reference>
<reference key="7">
    <citation type="journal article" date="2004" name="Eukaryot. Cell">
        <title>Hemoglobin regulates expression of an activator of mating-type locus alpha genes in Candida albicans.</title>
        <authorList>
            <person name="Pendrak M.L."/>
            <person name="Yan S.S."/>
            <person name="Roberts D.D."/>
        </authorList>
    </citation>
    <scope>INDUCTION</scope>
</reference>
<protein>
    <recommendedName>
        <fullName>Mating-type-like protein A1</fullName>
        <shortName>MTLa1 protein</shortName>
    </recommendedName>
</protein>
<gene>
    <name type="primary">MTLA1</name>
    <name type="ordered locus">CAALFM_C501740CA</name>
    <name type="ORF">CaO19.3201</name>
</gene>
<proteinExistence type="evidence at protein level"/>
<comment type="function">
    <text evidence="3 4 5">Mating type proteins are sequence specific DNA-binding proteins that act as master switches in yeast differentiation by controlling gene expression in a cell type-specific fashion. Transcriptional corepressor that acts in conjunction with ALPHA2 to repress transcription both of homozygote-specific genes and of genes necessary for the white-opaque switch, a prerequisite for mating.</text>
</comment>
<comment type="subunit">
    <text evidence="1">Forms a heterodimer with ALPHA2.</text>
</comment>
<comment type="subcellular location">
    <subcellularLocation>
        <location evidence="2">Nucleus</location>
    </subcellularLocation>
</comment>
<comment type="induction">
    <text evidence="6">Moderately repressed by HBR1 in response to hemoglobin and growth signals.</text>
</comment>
<comment type="miscellaneous">
    <text>The C.albicans mating-type-like (MTL) locus contains, in addition to the genes for the regulatory proteins (MTLA1, MTLA2, MTLALPHA1 and MTLALPHA2), a and alpha idiomorphs of a phosphatidylinositol kinase (PIKA and PIKALPHA), a poly(A) polymerase (PAPA and PAPALPHA) and an oxysterol binding protein-like protein (OBPA and OBPALPHA).</text>
</comment>
<comment type="miscellaneous">
    <text>Most C.albicans strains are heterozygous at the MTL locus and do not readily undergo white-opaque switching and mating, but mating occurs in hemi- or homozygous strains. Mating takes place in opaque cells, produces tetraploid progeny and seems to occur rarely, if at all, in nature. Conservation of mating capacity is rather thought to be due to the simultaneously regulated white-opaque switch, which seems to play an important role in host commensalism.</text>
</comment>
<comment type="similarity">
    <text evidence="7">Belongs to the MATA1 family.</text>
</comment>